<accession>A5G2D2</accession>
<proteinExistence type="inferred from homology"/>
<feature type="chain" id="PRO_1000012179" description="Lipoyl synthase">
    <location>
        <begin position="1"/>
        <end position="320"/>
    </location>
</feature>
<feature type="domain" description="Radical SAM core" evidence="2">
    <location>
        <begin position="73"/>
        <end position="289"/>
    </location>
</feature>
<feature type="region of interest" description="Disordered" evidence="3">
    <location>
        <begin position="1"/>
        <end position="27"/>
    </location>
</feature>
<feature type="compositionally biased region" description="Basic and acidic residues" evidence="3">
    <location>
        <begin position="16"/>
        <end position="25"/>
    </location>
</feature>
<feature type="binding site" evidence="1">
    <location>
        <position position="61"/>
    </location>
    <ligand>
        <name>[4Fe-4S] cluster</name>
        <dbReference type="ChEBI" id="CHEBI:49883"/>
        <label>1</label>
    </ligand>
</feature>
<feature type="binding site" evidence="1">
    <location>
        <position position="66"/>
    </location>
    <ligand>
        <name>[4Fe-4S] cluster</name>
        <dbReference type="ChEBI" id="CHEBI:49883"/>
        <label>1</label>
    </ligand>
</feature>
<feature type="binding site" evidence="1">
    <location>
        <position position="72"/>
    </location>
    <ligand>
        <name>[4Fe-4S] cluster</name>
        <dbReference type="ChEBI" id="CHEBI:49883"/>
        <label>1</label>
    </ligand>
</feature>
<feature type="binding site" evidence="1">
    <location>
        <position position="87"/>
    </location>
    <ligand>
        <name>[4Fe-4S] cluster</name>
        <dbReference type="ChEBI" id="CHEBI:49883"/>
        <label>2</label>
        <note>4Fe-4S-S-AdoMet</note>
    </ligand>
</feature>
<feature type="binding site" evidence="1">
    <location>
        <position position="91"/>
    </location>
    <ligand>
        <name>[4Fe-4S] cluster</name>
        <dbReference type="ChEBI" id="CHEBI:49883"/>
        <label>2</label>
        <note>4Fe-4S-S-AdoMet</note>
    </ligand>
</feature>
<feature type="binding site" evidence="1">
    <location>
        <position position="94"/>
    </location>
    <ligand>
        <name>[4Fe-4S] cluster</name>
        <dbReference type="ChEBI" id="CHEBI:49883"/>
        <label>2</label>
        <note>4Fe-4S-S-AdoMet</note>
    </ligand>
</feature>
<feature type="binding site" evidence="1">
    <location>
        <position position="300"/>
    </location>
    <ligand>
        <name>[4Fe-4S] cluster</name>
        <dbReference type="ChEBI" id="CHEBI:49883"/>
        <label>1</label>
    </ligand>
</feature>
<protein>
    <recommendedName>
        <fullName evidence="1">Lipoyl synthase</fullName>
        <ecNumber evidence="1">2.8.1.8</ecNumber>
    </recommendedName>
    <alternativeName>
        <fullName evidence="1">Lip-syn</fullName>
        <shortName evidence="1">LS</shortName>
    </alternativeName>
    <alternativeName>
        <fullName evidence="1">Lipoate synthase</fullName>
    </alternativeName>
    <alternativeName>
        <fullName evidence="1">Lipoic acid synthase</fullName>
    </alternativeName>
    <alternativeName>
        <fullName evidence="1">Sulfur insertion protein LipA</fullName>
    </alternativeName>
</protein>
<dbReference type="EC" id="2.8.1.8" evidence="1"/>
<dbReference type="EMBL" id="CP000697">
    <property type="protein sequence ID" value="ABQ32014.1"/>
    <property type="molecule type" value="Genomic_DNA"/>
</dbReference>
<dbReference type="RefSeq" id="WP_007421399.1">
    <property type="nucleotide sequence ID" value="NC_009484.1"/>
</dbReference>
<dbReference type="SMR" id="A5G2D2"/>
<dbReference type="STRING" id="349163.Acry_2824"/>
<dbReference type="KEGG" id="acr:Acry_2824"/>
<dbReference type="eggNOG" id="COG0320">
    <property type="taxonomic scope" value="Bacteria"/>
</dbReference>
<dbReference type="HOGENOM" id="CLU_033144_2_1_5"/>
<dbReference type="UniPathway" id="UPA00538">
    <property type="reaction ID" value="UER00593"/>
</dbReference>
<dbReference type="Proteomes" id="UP000000245">
    <property type="component" value="Chromosome"/>
</dbReference>
<dbReference type="GO" id="GO:0005737">
    <property type="term" value="C:cytoplasm"/>
    <property type="evidence" value="ECO:0007669"/>
    <property type="project" value="UniProtKB-SubCell"/>
</dbReference>
<dbReference type="GO" id="GO:0051539">
    <property type="term" value="F:4 iron, 4 sulfur cluster binding"/>
    <property type="evidence" value="ECO:0007669"/>
    <property type="project" value="UniProtKB-UniRule"/>
</dbReference>
<dbReference type="GO" id="GO:0016992">
    <property type="term" value="F:lipoate synthase activity"/>
    <property type="evidence" value="ECO:0007669"/>
    <property type="project" value="UniProtKB-UniRule"/>
</dbReference>
<dbReference type="GO" id="GO:0046872">
    <property type="term" value="F:metal ion binding"/>
    <property type="evidence" value="ECO:0007669"/>
    <property type="project" value="UniProtKB-KW"/>
</dbReference>
<dbReference type="CDD" id="cd01335">
    <property type="entry name" value="Radical_SAM"/>
    <property type="match status" value="1"/>
</dbReference>
<dbReference type="FunFam" id="3.20.20.70:FF:000040">
    <property type="entry name" value="Lipoyl synthase"/>
    <property type="match status" value="1"/>
</dbReference>
<dbReference type="Gene3D" id="3.20.20.70">
    <property type="entry name" value="Aldolase class I"/>
    <property type="match status" value="1"/>
</dbReference>
<dbReference type="HAMAP" id="MF_00206">
    <property type="entry name" value="Lipoyl_synth"/>
    <property type="match status" value="1"/>
</dbReference>
<dbReference type="InterPro" id="IPR013785">
    <property type="entry name" value="Aldolase_TIM"/>
</dbReference>
<dbReference type="InterPro" id="IPR006638">
    <property type="entry name" value="Elp3/MiaA/NifB-like_rSAM"/>
</dbReference>
<dbReference type="InterPro" id="IPR003698">
    <property type="entry name" value="Lipoyl_synth"/>
</dbReference>
<dbReference type="InterPro" id="IPR007197">
    <property type="entry name" value="rSAM"/>
</dbReference>
<dbReference type="NCBIfam" id="TIGR00510">
    <property type="entry name" value="lipA"/>
    <property type="match status" value="1"/>
</dbReference>
<dbReference type="NCBIfam" id="NF004019">
    <property type="entry name" value="PRK05481.1"/>
    <property type="match status" value="1"/>
</dbReference>
<dbReference type="NCBIfam" id="NF009544">
    <property type="entry name" value="PRK12928.1"/>
    <property type="match status" value="1"/>
</dbReference>
<dbReference type="PANTHER" id="PTHR10949">
    <property type="entry name" value="LIPOYL SYNTHASE"/>
    <property type="match status" value="1"/>
</dbReference>
<dbReference type="PANTHER" id="PTHR10949:SF0">
    <property type="entry name" value="LIPOYL SYNTHASE, MITOCHONDRIAL"/>
    <property type="match status" value="1"/>
</dbReference>
<dbReference type="Pfam" id="PF04055">
    <property type="entry name" value="Radical_SAM"/>
    <property type="match status" value="1"/>
</dbReference>
<dbReference type="PIRSF" id="PIRSF005963">
    <property type="entry name" value="Lipoyl_synth"/>
    <property type="match status" value="1"/>
</dbReference>
<dbReference type="SFLD" id="SFLDF00271">
    <property type="entry name" value="lipoyl_synthase"/>
    <property type="match status" value="1"/>
</dbReference>
<dbReference type="SFLD" id="SFLDG01058">
    <property type="entry name" value="lipoyl_synthase_like"/>
    <property type="match status" value="1"/>
</dbReference>
<dbReference type="SMART" id="SM00729">
    <property type="entry name" value="Elp3"/>
    <property type="match status" value="1"/>
</dbReference>
<dbReference type="SUPFAM" id="SSF102114">
    <property type="entry name" value="Radical SAM enzymes"/>
    <property type="match status" value="1"/>
</dbReference>
<dbReference type="PROSITE" id="PS51918">
    <property type="entry name" value="RADICAL_SAM"/>
    <property type="match status" value="1"/>
</dbReference>
<keyword id="KW-0004">4Fe-4S</keyword>
<keyword id="KW-0963">Cytoplasm</keyword>
<keyword id="KW-0408">Iron</keyword>
<keyword id="KW-0411">Iron-sulfur</keyword>
<keyword id="KW-0479">Metal-binding</keyword>
<keyword id="KW-1185">Reference proteome</keyword>
<keyword id="KW-0949">S-adenosyl-L-methionine</keyword>
<keyword id="KW-0808">Transferase</keyword>
<evidence type="ECO:0000255" key="1">
    <source>
        <dbReference type="HAMAP-Rule" id="MF_00206"/>
    </source>
</evidence>
<evidence type="ECO:0000255" key="2">
    <source>
        <dbReference type="PROSITE-ProRule" id="PRU01266"/>
    </source>
</evidence>
<evidence type="ECO:0000256" key="3">
    <source>
        <dbReference type="SAM" id="MobiDB-lite"/>
    </source>
</evidence>
<gene>
    <name evidence="1" type="primary">lipA</name>
    <name type="ordered locus">Acry_2824</name>
</gene>
<comment type="function">
    <text evidence="1">Catalyzes the radical-mediated insertion of two sulfur atoms into the C-6 and C-8 positions of the octanoyl moiety bound to the lipoyl domains of lipoate-dependent enzymes, thereby converting the octanoylated domains into lipoylated derivatives.</text>
</comment>
<comment type="catalytic activity">
    <reaction evidence="1">
        <text>[[Fe-S] cluster scaffold protein carrying a second [4Fe-4S](2+) cluster] + N(6)-octanoyl-L-lysyl-[protein] + 2 oxidized [2Fe-2S]-[ferredoxin] + 2 S-adenosyl-L-methionine + 4 H(+) = [[Fe-S] cluster scaffold protein] + N(6)-[(R)-dihydrolipoyl]-L-lysyl-[protein] + 4 Fe(3+) + 2 hydrogen sulfide + 2 5'-deoxyadenosine + 2 L-methionine + 2 reduced [2Fe-2S]-[ferredoxin]</text>
        <dbReference type="Rhea" id="RHEA:16585"/>
        <dbReference type="Rhea" id="RHEA-COMP:9928"/>
        <dbReference type="Rhea" id="RHEA-COMP:10000"/>
        <dbReference type="Rhea" id="RHEA-COMP:10001"/>
        <dbReference type="Rhea" id="RHEA-COMP:10475"/>
        <dbReference type="Rhea" id="RHEA-COMP:14568"/>
        <dbReference type="Rhea" id="RHEA-COMP:14569"/>
        <dbReference type="ChEBI" id="CHEBI:15378"/>
        <dbReference type="ChEBI" id="CHEBI:17319"/>
        <dbReference type="ChEBI" id="CHEBI:29034"/>
        <dbReference type="ChEBI" id="CHEBI:29919"/>
        <dbReference type="ChEBI" id="CHEBI:33722"/>
        <dbReference type="ChEBI" id="CHEBI:33737"/>
        <dbReference type="ChEBI" id="CHEBI:33738"/>
        <dbReference type="ChEBI" id="CHEBI:57844"/>
        <dbReference type="ChEBI" id="CHEBI:59789"/>
        <dbReference type="ChEBI" id="CHEBI:78809"/>
        <dbReference type="ChEBI" id="CHEBI:83100"/>
        <dbReference type="EC" id="2.8.1.8"/>
    </reaction>
</comment>
<comment type="cofactor">
    <cofactor evidence="1">
        <name>[4Fe-4S] cluster</name>
        <dbReference type="ChEBI" id="CHEBI:49883"/>
    </cofactor>
    <text evidence="1">Binds 2 [4Fe-4S] clusters per subunit. One cluster is coordinated with 3 cysteines and an exchangeable S-adenosyl-L-methionine.</text>
</comment>
<comment type="pathway">
    <text evidence="1">Protein modification; protein lipoylation via endogenous pathway; protein N(6)-(lipoyl)lysine from octanoyl-[acyl-carrier-protein]: step 2/2.</text>
</comment>
<comment type="subcellular location">
    <subcellularLocation>
        <location evidence="1">Cytoplasm</location>
    </subcellularLocation>
</comment>
<comment type="similarity">
    <text evidence="1">Belongs to the radical SAM superfamily. Lipoyl synthase family.</text>
</comment>
<sequence>MRVEIDHRNSGGGKLRHPEKQHRPDNPIQRKPAWIRVKAPNHPVYHETRALMREAKLVTVCEEAACPNIGECWSQRHATMMIMGEICTRACAFCNVTTGQPAPLAADEPARVAEAVARLGLQHVVITSVDRDDLDDGGAAHFAAVIGAIRAAAPSTTIEILTPDFLRKPGALEVVVAARPDVFNHNLETVPRLYPSIRPGARYYQSLRLLDRVKQLDPSIFTKSGLMAGLGEDRGEVGQVMDDLRIADVDFLTIGQYLQPTVKHAAVDRFVTPDEFADLAAMARAKGFLMVSATPLTRSSYHADADFAALREARAARHAA</sequence>
<organism>
    <name type="scientific">Acidiphilium cryptum (strain JF-5)</name>
    <dbReference type="NCBI Taxonomy" id="349163"/>
    <lineage>
        <taxon>Bacteria</taxon>
        <taxon>Pseudomonadati</taxon>
        <taxon>Pseudomonadota</taxon>
        <taxon>Alphaproteobacteria</taxon>
        <taxon>Acetobacterales</taxon>
        <taxon>Acidocellaceae</taxon>
        <taxon>Acidiphilium</taxon>
    </lineage>
</organism>
<reference key="1">
    <citation type="submission" date="2007-05" db="EMBL/GenBank/DDBJ databases">
        <title>Complete sequence of chromosome of Acidiphilium cryptum JF-5.</title>
        <authorList>
            <consortium name="US DOE Joint Genome Institute"/>
            <person name="Copeland A."/>
            <person name="Lucas S."/>
            <person name="Lapidus A."/>
            <person name="Barry K."/>
            <person name="Detter J.C."/>
            <person name="Glavina del Rio T."/>
            <person name="Hammon N."/>
            <person name="Israni S."/>
            <person name="Dalin E."/>
            <person name="Tice H."/>
            <person name="Pitluck S."/>
            <person name="Sims D."/>
            <person name="Brettin T."/>
            <person name="Bruce D."/>
            <person name="Han C."/>
            <person name="Schmutz J."/>
            <person name="Larimer F."/>
            <person name="Land M."/>
            <person name="Hauser L."/>
            <person name="Kyrpides N."/>
            <person name="Kim E."/>
            <person name="Magnuson T."/>
            <person name="Richardson P."/>
        </authorList>
    </citation>
    <scope>NUCLEOTIDE SEQUENCE [LARGE SCALE GENOMIC DNA]</scope>
    <source>
        <strain>JF-5</strain>
    </source>
</reference>
<name>LIPA_ACICJ</name>